<dbReference type="EC" id="2.7.1.33" evidence="1"/>
<dbReference type="EMBL" id="CU207211">
    <property type="protein sequence ID" value="CAL63100.1"/>
    <property type="molecule type" value="Genomic_DNA"/>
</dbReference>
<dbReference type="SMR" id="A4G9B3"/>
<dbReference type="STRING" id="204773.HEAR2990"/>
<dbReference type="KEGG" id="har:HEAR2990"/>
<dbReference type="eggNOG" id="COG1521">
    <property type="taxonomic scope" value="Bacteria"/>
</dbReference>
<dbReference type="HOGENOM" id="CLU_066627_0_0_4"/>
<dbReference type="OrthoDB" id="9781305at2"/>
<dbReference type="UniPathway" id="UPA00241">
    <property type="reaction ID" value="UER00352"/>
</dbReference>
<dbReference type="Proteomes" id="UP000006697">
    <property type="component" value="Chromosome"/>
</dbReference>
<dbReference type="GO" id="GO:0005737">
    <property type="term" value="C:cytoplasm"/>
    <property type="evidence" value="ECO:0007669"/>
    <property type="project" value="UniProtKB-SubCell"/>
</dbReference>
<dbReference type="GO" id="GO:0005524">
    <property type="term" value="F:ATP binding"/>
    <property type="evidence" value="ECO:0007669"/>
    <property type="project" value="UniProtKB-UniRule"/>
</dbReference>
<dbReference type="GO" id="GO:0004594">
    <property type="term" value="F:pantothenate kinase activity"/>
    <property type="evidence" value="ECO:0007669"/>
    <property type="project" value="UniProtKB-UniRule"/>
</dbReference>
<dbReference type="GO" id="GO:0015937">
    <property type="term" value="P:coenzyme A biosynthetic process"/>
    <property type="evidence" value="ECO:0007669"/>
    <property type="project" value="UniProtKB-UniRule"/>
</dbReference>
<dbReference type="CDD" id="cd24015">
    <property type="entry name" value="ASKHA_NBD_PanK-III"/>
    <property type="match status" value="1"/>
</dbReference>
<dbReference type="Gene3D" id="3.30.420.40">
    <property type="match status" value="2"/>
</dbReference>
<dbReference type="HAMAP" id="MF_01274">
    <property type="entry name" value="Pantothen_kinase_3"/>
    <property type="match status" value="1"/>
</dbReference>
<dbReference type="InterPro" id="IPR043129">
    <property type="entry name" value="ATPase_NBD"/>
</dbReference>
<dbReference type="InterPro" id="IPR004619">
    <property type="entry name" value="Type_III_PanK"/>
</dbReference>
<dbReference type="NCBIfam" id="TIGR00671">
    <property type="entry name" value="baf"/>
    <property type="match status" value="1"/>
</dbReference>
<dbReference type="PANTHER" id="PTHR34265">
    <property type="entry name" value="TYPE III PANTOTHENATE KINASE"/>
    <property type="match status" value="1"/>
</dbReference>
<dbReference type="PANTHER" id="PTHR34265:SF1">
    <property type="entry name" value="TYPE III PANTOTHENATE KINASE"/>
    <property type="match status" value="1"/>
</dbReference>
<dbReference type="Pfam" id="PF03309">
    <property type="entry name" value="Pan_kinase"/>
    <property type="match status" value="1"/>
</dbReference>
<dbReference type="SUPFAM" id="SSF53067">
    <property type="entry name" value="Actin-like ATPase domain"/>
    <property type="match status" value="2"/>
</dbReference>
<sequence length="258" mass="26548">MLLLVDAGNTRIKWVLVDCSSGQQTPGSWHVAGSAARAETAQLAQAWSSFSISRVLLSNVAGAELREELERAVLHAAGDIELEWFASTPAAGGVRNHYLNPAQLGSDRFAAAIGAHVLFPNRPLVVATCGTATTIDAVNADGAFVGGMILPGLALMASALANNTAQLPEVALHASSTQPFADNTDAAIVSGCLAAQAGAIERAVKAHAAAHPQGELYCILAGGAADLIAPHLSIAYKRVDNLVLIGLHTVAIHTLPTC</sequence>
<feature type="chain" id="PRO_1000054380" description="Type III pantothenate kinase">
    <location>
        <begin position="1"/>
        <end position="258"/>
    </location>
</feature>
<feature type="active site" description="Proton acceptor" evidence="1">
    <location>
        <position position="107"/>
    </location>
</feature>
<feature type="binding site" evidence="1">
    <location>
        <begin position="6"/>
        <end position="13"/>
    </location>
    <ligand>
        <name>ATP</name>
        <dbReference type="ChEBI" id="CHEBI:30616"/>
    </ligand>
</feature>
<feature type="binding site" evidence="1">
    <location>
        <position position="98"/>
    </location>
    <ligand>
        <name>substrate</name>
    </ligand>
</feature>
<feature type="binding site" evidence="1">
    <location>
        <begin position="105"/>
        <end position="108"/>
    </location>
    <ligand>
        <name>substrate</name>
    </ligand>
</feature>
<feature type="binding site" evidence="1">
    <location>
        <position position="131"/>
    </location>
    <ligand>
        <name>ATP</name>
        <dbReference type="ChEBI" id="CHEBI:30616"/>
    </ligand>
</feature>
<feature type="binding site" evidence="1">
    <location>
        <position position="184"/>
    </location>
    <ligand>
        <name>substrate</name>
    </ligand>
</feature>
<comment type="function">
    <text evidence="1">Catalyzes the phosphorylation of pantothenate (Pan), the first step in CoA biosynthesis.</text>
</comment>
<comment type="catalytic activity">
    <reaction evidence="1">
        <text>(R)-pantothenate + ATP = (R)-4'-phosphopantothenate + ADP + H(+)</text>
        <dbReference type="Rhea" id="RHEA:16373"/>
        <dbReference type="ChEBI" id="CHEBI:10986"/>
        <dbReference type="ChEBI" id="CHEBI:15378"/>
        <dbReference type="ChEBI" id="CHEBI:29032"/>
        <dbReference type="ChEBI" id="CHEBI:30616"/>
        <dbReference type="ChEBI" id="CHEBI:456216"/>
        <dbReference type="EC" id="2.7.1.33"/>
    </reaction>
</comment>
<comment type="cofactor">
    <cofactor evidence="1">
        <name>NH4(+)</name>
        <dbReference type="ChEBI" id="CHEBI:28938"/>
    </cofactor>
    <cofactor evidence="1">
        <name>K(+)</name>
        <dbReference type="ChEBI" id="CHEBI:29103"/>
    </cofactor>
    <text evidence="1">A monovalent cation. Ammonium or potassium.</text>
</comment>
<comment type="pathway">
    <text evidence="1">Cofactor biosynthesis; coenzyme A biosynthesis; CoA from (R)-pantothenate: step 1/5.</text>
</comment>
<comment type="subunit">
    <text evidence="1">Homodimer.</text>
</comment>
<comment type="subcellular location">
    <subcellularLocation>
        <location evidence="1">Cytoplasm</location>
    </subcellularLocation>
</comment>
<comment type="similarity">
    <text evidence="1">Belongs to the type III pantothenate kinase family.</text>
</comment>
<keyword id="KW-0067">ATP-binding</keyword>
<keyword id="KW-0173">Coenzyme A biosynthesis</keyword>
<keyword id="KW-0963">Cytoplasm</keyword>
<keyword id="KW-0418">Kinase</keyword>
<keyword id="KW-0547">Nucleotide-binding</keyword>
<keyword id="KW-0630">Potassium</keyword>
<keyword id="KW-1185">Reference proteome</keyword>
<keyword id="KW-0808">Transferase</keyword>
<organism>
    <name type="scientific">Herminiimonas arsenicoxydans</name>
    <dbReference type="NCBI Taxonomy" id="204773"/>
    <lineage>
        <taxon>Bacteria</taxon>
        <taxon>Pseudomonadati</taxon>
        <taxon>Pseudomonadota</taxon>
        <taxon>Betaproteobacteria</taxon>
        <taxon>Burkholderiales</taxon>
        <taxon>Oxalobacteraceae</taxon>
        <taxon>Herminiimonas</taxon>
    </lineage>
</organism>
<name>COAX_HERAR</name>
<evidence type="ECO:0000255" key="1">
    <source>
        <dbReference type="HAMAP-Rule" id="MF_01274"/>
    </source>
</evidence>
<proteinExistence type="inferred from homology"/>
<gene>
    <name evidence="1" type="primary">coaX</name>
    <name type="ordered locus">HEAR2990</name>
</gene>
<reference key="1">
    <citation type="journal article" date="2007" name="PLoS Genet.">
        <title>A tale of two oxidation states: bacterial colonization of arsenic-rich environments.</title>
        <authorList>
            <person name="Muller D."/>
            <person name="Medigue C."/>
            <person name="Koechler S."/>
            <person name="Barbe V."/>
            <person name="Barakat M."/>
            <person name="Talla E."/>
            <person name="Bonnefoy V."/>
            <person name="Krin E."/>
            <person name="Arsene-Ploetze F."/>
            <person name="Carapito C."/>
            <person name="Chandler M."/>
            <person name="Cournoyer B."/>
            <person name="Cruveiller S."/>
            <person name="Dossat C."/>
            <person name="Duval S."/>
            <person name="Heymann M."/>
            <person name="Leize E."/>
            <person name="Lieutaud A."/>
            <person name="Lievremont D."/>
            <person name="Makita Y."/>
            <person name="Mangenot S."/>
            <person name="Nitschke W."/>
            <person name="Ortet P."/>
            <person name="Perdrial N."/>
            <person name="Schoepp B."/>
            <person name="Siguier P."/>
            <person name="Simeonova D.D."/>
            <person name="Rouy Z."/>
            <person name="Segurens B."/>
            <person name="Turlin E."/>
            <person name="Vallenet D."/>
            <person name="van Dorsselaer A."/>
            <person name="Weiss S."/>
            <person name="Weissenbach J."/>
            <person name="Lett M.-C."/>
            <person name="Danchin A."/>
            <person name="Bertin P.N."/>
        </authorList>
    </citation>
    <scope>NUCLEOTIDE SEQUENCE [LARGE SCALE GENOMIC DNA]</scope>
    <source>
        <strain>ULPAs1</strain>
    </source>
</reference>
<protein>
    <recommendedName>
        <fullName evidence="1">Type III pantothenate kinase</fullName>
        <ecNumber evidence="1">2.7.1.33</ecNumber>
    </recommendedName>
    <alternativeName>
        <fullName evidence="1">PanK-III</fullName>
    </alternativeName>
    <alternativeName>
        <fullName evidence="1">Pantothenic acid kinase</fullName>
    </alternativeName>
</protein>
<accession>A4G9B3</accession>